<accession>Q5JIK2</accession>
<gene>
    <name type="primary">porG</name>
    <name type="ordered locus">TK1978</name>
</gene>
<proteinExistence type="predicted"/>
<protein>
    <recommendedName>
        <fullName>Pyruvate/ketoisovalerate oxidoreductases common subunit gamma</fullName>
    </recommendedName>
    <domain>
        <recommendedName>
            <fullName>Pyruvate synthase subunit PorC</fullName>
            <ecNumber>1.2.7.1</ecNumber>
        </recommendedName>
        <alternativeName>
            <fullName>Pyruvate oxidoreductase gamma chain</fullName>
            <shortName>POR</shortName>
        </alternativeName>
        <alternativeName>
            <fullName>Pyruvic-ferredoxin oxidoreductase subunit gamma</fullName>
        </alternativeName>
    </domain>
    <domain>
        <recommendedName>
            <fullName>Ketoisovalerate oxidoreductase subunit VorC</fullName>
            <shortName>VOR</shortName>
            <ecNumber>1.2.7.7</ecNumber>
        </recommendedName>
        <alternativeName>
            <fullName>2-oxoisovalerate ferredoxin reductase subunit gamma</fullName>
        </alternativeName>
        <alternativeName>
            <fullName>2-oxoisovalerate oxidoreductase gamma chain</fullName>
        </alternativeName>
    </domain>
</protein>
<dbReference type="EC" id="1.2.7.1"/>
<dbReference type="EC" id="1.2.7.7"/>
<dbReference type="EMBL" id="AP006878">
    <property type="protein sequence ID" value="BAD86167.1"/>
    <property type="molecule type" value="Genomic_DNA"/>
</dbReference>
<dbReference type="RefSeq" id="WP_011250928.1">
    <property type="nucleotide sequence ID" value="NC_006624.1"/>
</dbReference>
<dbReference type="SMR" id="Q5JIK2"/>
<dbReference type="FunCoup" id="Q5JIK2">
    <property type="interactions" value="43"/>
</dbReference>
<dbReference type="STRING" id="69014.TK1978"/>
<dbReference type="EnsemblBacteria" id="BAD86167">
    <property type="protein sequence ID" value="BAD86167"/>
    <property type="gene ID" value="TK1978"/>
</dbReference>
<dbReference type="GeneID" id="78448513"/>
<dbReference type="KEGG" id="tko:TK1978"/>
<dbReference type="PATRIC" id="fig|69014.16.peg.1932"/>
<dbReference type="eggNOG" id="arCOG01603">
    <property type="taxonomic scope" value="Archaea"/>
</dbReference>
<dbReference type="HOGENOM" id="CLU_087284_2_0_2"/>
<dbReference type="InParanoid" id="Q5JIK2"/>
<dbReference type="OrthoDB" id="372091at2157"/>
<dbReference type="PhylomeDB" id="Q5JIK2"/>
<dbReference type="Proteomes" id="UP000000536">
    <property type="component" value="Chromosome"/>
</dbReference>
<dbReference type="GO" id="GO:0043807">
    <property type="term" value="F:3-methyl-2-oxobutanoate dehydrogenase (ferredoxin) activity"/>
    <property type="evidence" value="ECO:0007669"/>
    <property type="project" value="UniProtKB-EC"/>
</dbReference>
<dbReference type="GO" id="GO:0019164">
    <property type="term" value="F:pyruvate synthase activity"/>
    <property type="evidence" value="ECO:0007669"/>
    <property type="project" value="UniProtKB-EC"/>
</dbReference>
<dbReference type="Gene3D" id="3.40.920.10">
    <property type="entry name" value="Pyruvate-ferredoxin oxidoreductase, PFOR, domain III"/>
    <property type="match status" value="1"/>
</dbReference>
<dbReference type="InterPro" id="IPR051626">
    <property type="entry name" value="Oxidoreductase_gamma_subunit"/>
</dbReference>
<dbReference type="InterPro" id="IPR011894">
    <property type="entry name" value="PorC_KorC"/>
</dbReference>
<dbReference type="InterPro" id="IPR019752">
    <property type="entry name" value="Pyrv/ketoisovalerate_OxRed_cat"/>
</dbReference>
<dbReference type="InterPro" id="IPR002869">
    <property type="entry name" value="Pyrv_flavodox_OxRed_cen"/>
</dbReference>
<dbReference type="NCBIfam" id="TIGR02175">
    <property type="entry name" value="PorC_KorC"/>
    <property type="match status" value="1"/>
</dbReference>
<dbReference type="NCBIfam" id="NF006321">
    <property type="entry name" value="PRK08534.1"/>
    <property type="match status" value="1"/>
</dbReference>
<dbReference type="NCBIfam" id="NF010632">
    <property type="entry name" value="PRK14029.1"/>
    <property type="match status" value="1"/>
</dbReference>
<dbReference type="PANTHER" id="PTHR43366">
    <property type="entry name" value="PYRUVATE SYNTHASE SUBUNIT PORC"/>
    <property type="match status" value="1"/>
</dbReference>
<dbReference type="PANTHER" id="PTHR43366:SF1">
    <property type="entry name" value="PYRUVATE SYNTHASE SUBUNIT PORC"/>
    <property type="match status" value="1"/>
</dbReference>
<dbReference type="Pfam" id="PF01558">
    <property type="entry name" value="POR"/>
    <property type="match status" value="1"/>
</dbReference>
<dbReference type="SUPFAM" id="SSF53323">
    <property type="entry name" value="Pyruvate-ferredoxin oxidoreductase, PFOR, domain III"/>
    <property type="match status" value="1"/>
</dbReference>
<reference key="1">
    <citation type="journal article" date="2005" name="Genome Res.">
        <title>Complete genome sequence of the hyperthermophilic archaeon Thermococcus kodakaraensis KOD1 and comparison with Pyrococcus genomes.</title>
        <authorList>
            <person name="Fukui T."/>
            <person name="Atomi H."/>
            <person name="Kanai T."/>
            <person name="Matsumi R."/>
            <person name="Fujiwara S."/>
            <person name="Imanaka T."/>
        </authorList>
    </citation>
    <scope>NUCLEOTIDE SEQUENCE [LARGE SCALE GENOMIC DNA]</scope>
    <source>
        <strain>ATCC BAA-918 / JCM 12380 / KOD1</strain>
    </source>
</reference>
<comment type="catalytic activity">
    <reaction>
        <text>2 oxidized [2Fe-2S]-[ferredoxin] + pyruvate + CoA = 2 reduced [2Fe-2S]-[ferredoxin] + acetyl-CoA + CO2 + H(+)</text>
        <dbReference type="Rhea" id="RHEA:12765"/>
        <dbReference type="Rhea" id="RHEA-COMP:10000"/>
        <dbReference type="Rhea" id="RHEA-COMP:10001"/>
        <dbReference type="ChEBI" id="CHEBI:15361"/>
        <dbReference type="ChEBI" id="CHEBI:15378"/>
        <dbReference type="ChEBI" id="CHEBI:16526"/>
        <dbReference type="ChEBI" id="CHEBI:33737"/>
        <dbReference type="ChEBI" id="CHEBI:33738"/>
        <dbReference type="ChEBI" id="CHEBI:57287"/>
        <dbReference type="ChEBI" id="CHEBI:57288"/>
        <dbReference type="EC" id="1.2.7.1"/>
    </reaction>
</comment>
<comment type="catalytic activity">
    <reaction>
        <text>3-methyl-2-oxobutanoate + 2 oxidized [2Fe-2S]-[ferredoxin] + CoA = 2-methylpropanoyl-CoA + 2 reduced [2Fe-2S]-[ferredoxin] + CO2 + H(+)</text>
        <dbReference type="Rhea" id="RHEA:11712"/>
        <dbReference type="Rhea" id="RHEA-COMP:10000"/>
        <dbReference type="Rhea" id="RHEA-COMP:10001"/>
        <dbReference type="ChEBI" id="CHEBI:11851"/>
        <dbReference type="ChEBI" id="CHEBI:15378"/>
        <dbReference type="ChEBI" id="CHEBI:16526"/>
        <dbReference type="ChEBI" id="CHEBI:33737"/>
        <dbReference type="ChEBI" id="CHEBI:33738"/>
        <dbReference type="ChEBI" id="CHEBI:57287"/>
        <dbReference type="ChEBI" id="CHEBI:57338"/>
        <dbReference type="EC" id="1.2.7.7"/>
    </reaction>
</comment>
<comment type="subunit">
    <text>Heterotetramer of one alpha, one beta, one delta and one gamma chain.</text>
</comment>
<keyword id="KW-0560">Oxidoreductase</keyword>
<keyword id="KW-1185">Reference proteome</keyword>
<name>PORC_THEKO</name>
<organism>
    <name type="scientific">Thermococcus kodakarensis (strain ATCC BAA-918 / JCM 12380 / KOD1)</name>
    <name type="common">Pyrococcus kodakaraensis (strain KOD1)</name>
    <dbReference type="NCBI Taxonomy" id="69014"/>
    <lineage>
        <taxon>Archaea</taxon>
        <taxon>Methanobacteriati</taxon>
        <taxon>Methanobacteriota</taxon>
        <taxon>Thermococci</taxon>
        <taxon>Thermococcales</taxon>
        <taxon>Thermococcaceae</taxon>
        <taxon>Thermococcus</taxon>
    </lineage>
</organism>
<feature type="chain" id="PRO_0000099916" description="Pyruvate/ketoisovalerate oxidoreductases common subunit gamma">
    <location>
        <begin position="1"/>
        <end position="185"/>
    </location>
</feature>
<sequence length="185" mass="19693">MIEIRFHGRGGQGAVTAANILASAAFKEGKYVQAFPFFGVERRGAPVTAFTRIDDKPIRIKTQIYEPDVVVVLDPSLLDTVDVTAGLKDGGIVIVNTEKSKEEVLEKLKKKPGKLALVDATGIALEILGLPITNTAILGAVAKATGLVKLESVQEAIKETFSGALGEKNAKAAEEAFNKTVVYEL</sequence>